<accession>P11420</accession>
<accession>Q9VKX3</accession>
<proteinExistence type="evidence at protein level"/>
<evidence type="ECO:0000255" key="1">
    <source>
        <dbReference type="PROSITE-ProRule" id="PRU00981"/>
    </source>
</evidence>
<evidence type="ECO:0000256" key="2">
    <source>
        <dbReference type="SAM" id="MobiDB-lite"/>
    </source>
</evidence>
<evidence type="ECO:0000269" key="3">
    <source>
    </source>
</evidence>
<evidence type="ECO:0000269" key="4">
    <source>
    </source>
</evidence>
<name>DA_DROME</name>
<feature type="chain" id="PRO_0000127166" description="Protein daughterless">
    <location>
        <begin position="1"/>
        <end position="710"/>
    </location>
</feature>
<feature type="repeat" description="His-rich">
    <location>
        <begin position="198"/>
        <end position="226"/>
    </location>
</feature>
<feature type="repeat" description="His-rich">
    <location>
        <begin position="227"/>
        <end position="256"/>
    </location>
</feature>
<feature type="domain" description="bHLH" evidence="1">
    <location>
        <begin position="554"/>
        <end position="607"/>
    </location>
</feature>
<feature type="region of interest" description="Disordered" evidence="2">
    <location>
        <begin position="167"/>
        <end position="263"/>
    </location>
</feature>
<feature type="region of interest" description="Disordered" evidence="2">
    <location>
        <begin position="294"/>
        <end position="335"/>
    </location>
</feature>
<feature type="region of interest" description="Disordered" evidence="2">
    <location>
        <begin position="464"/>
        <end position="546"/>
    </location>
</feature>
<feature type="region of interest" description="Class A specific domain">
    <location>
        <begin position="609"/>
        <end position="632"/>
    </location>
</feature>
<feature type="region of interest" description="Disordered" evidence="2">
    <location>
        <begin position="645"/>
        <end position="710"/>
    </location>
</feature>
<feature type="compositionally biased region" description="Low complexity" evidence="2">
    <location>
        <begin position="177"/>
        <end position="195"/>
    </location>
</feature>
<feature type="compositionally biased region" description="Polar residues" evidence="2">
    <location>
        <begin position="196"/>
        <end position="212"/>
    </location>
</feature>
<feature type="compositionally biased region" description="Low complexity" evidence="2">
    <location>
        <begin position="231"/>
        <end position="243"/>
    </location>
</feature>
<feature type="compositionally biased region" description="Polar residues" evidence="2">
    <location>
        <begin position="252"/>
        <end position="262"/>
    </location>
</feature>
<feature type="compositionally biased region" description="Gly residues" evidence="2">
    <location>
        <begin position="318"/>
        <end position="332"/>
    </location>
</feature>
<feature type="compositionally biased region" description="Low complexity" evidence="2">
    <location>
        <begin position="492"/>
        <end position="502"/>
    </location>
</feature>
<feature type="compositionally biased region" description="Polar residues" evidence="2">
    <location>
        <begin position="506"/>
        <end position="525"/>
    </location>
</feature>
<feature type="compositionally biased region" description="Polar residues" evidence="2">
    <location>
        <begin position="646"/>
        <end position="687"/>
    </location>
</feature>
<feature type="compositionally biased region" description="Low complexity" evidence="2">
    <location>
        <begin position="688"/>
        <end position="710"/>
    </location>
</feature>
<feature type="modified residue" description="Phosphoserine" evidence="3">
    <location>
        <position position="43"/>
    </location>
</feature>
<feature type="modified residue" description="Phosphoserine" evidence="3">
    <location>
        <position position="535"/>
    </location>
</feature>
<feature type="modified residue" description="Phosphoserine" evidence="3">
    <location>
        <position position="536"/>
    </location>
</feature>
<gene>
    <name type="primary">da</name>
    <name type="ORF">CG5102</name>
</gene>
<keyword id="KW-0010">Activator</keyword>
<keyword id="KW-0217">Developmental protein</keyword>
<keyword id="KW-0221">Differentiation</keyword>
<keyword id="KW-0238">DNA-binding</keyword>
<keyword id="KW-0524">Neurogenesis</keyword>
<keyword id="KW-0539">Nucleus</keyword>
<keyword id="KW-0597">Phosphoprotein</keyword>
<keyword id="KW-1185">Reference proteome</keyword>
<keyword id="KW-0677">Repeat</keyword>
<keyword id="KW-0804">Transcription</keyword>
<keyword id="KW-0805">Transcription regulation</keyword>
<comment type="function">
    <text>Daughterless/Achaete-scute complex heterodimers act as transcriptional activators of neural cell fates and are involved in sex determination.</text>
</comment>
<comment type="subunit">
    <text evidence="4">Homodimer. Efficient DNA binding requires dimerization with another bHLH protein. Interacts with Amos. Interacts (via bHLH motif) with sisA and sc. Interacts with dpn (via bHLH motif).</text>
</comment>
<comment type="subcellular location">
    <subcellularLocation>
        <location>Nucleus</location>
    </subcellularLocation>
</comment>
<comment type="tissue specificity">
    <text>Ubiquitous.</text>
</comment>
<reference key="1">
    <citation type="journal article" date="1988" name="Cell">
        <title>Daughterless, a Drosophila gene essential for both neurogenesis and sex determination, has sequence similarities to myc and the achaete-scute complex.</title>
        <authorList>
            <person name="Caudy M."/>
            <person name="Vaessin H."/>
            <person name="Brand M."/>
            <person name="Tuma R."/>
            <person name="Jan L.Y."/>
            <person name="Jan Y.N."/>
        </authorList>
    </citation>
    <scope>NUCLEOTIDE SEQUENCE [MRNA]</scope>
</reference>
<reference key="2">
    <citation type="journal article" date="1988" name="Genes Dev.">
        <title>Molecular characterization of daughterless, a Drosophila sex determination gene with multiple roles in development.</title>
        <authorList>
            <person name="Cronmiller C."/>
            <person name="Schedl P."/>
            <person name="Cline T.W."/>
        </authorList>
    </citation>
    <scope>NUCLEOTIDE SEQUENCE [MRNA]</scope>
</reference>
<reference key="3">
    <citation type="journal article" date="2000" name="Science">
        <title>The genome sequence of Drosophila melanogaster.</title>
        <authorList>
            <person name="Adams M.D."/>
            <person name="Celniker S.E."/>
            <person name="Holt R.A."/>
            <person name="Evans C.A."/>
            <person name="Gocayne J.D."/>
            <person name="Amanatides P.G."/>
            <person name="Scherer S.E."/>
            <person name="Li P.W."/>
            <person name="Hoskins R.A."/>
            <person name="Galle R.F."/>
            <person name="George R.A."/>
            <person name="Lewis S.E."/>
            <person name="Richards S."/>
            <person name="Ashburner M."/>
            <person name="Henderson S.N."/>
            <person name="Sutton G.G."/>
            <person name="Wortman J.R."/>
            <person name="Yandell M.D."/>
            <person name="Zhang Q."/>
            <person name="Chen L.X."/>
            <person name="Brandon R.C."/>
            <person name="Rogers Y.-H.C."/>
            <person name="Blazej R.G."/>
            <person name="Champe M."/>
            <person name="Pfeiffer B.D."/>
            <person name="Wan K.H."/>
            <person name="Doyle C."/>
            <person name="Baxter E.G."/>
            <person name="Helt G."/>
            <person name="Nelson C.R."/>
            <person name="Miklos G.L.G."/>
            <person name="Abril J.F."/>
            <person name="Agbayani A."/>
            <person name="An H.-J."/>
            <person name="Andrews-Pfannkoch C."/>
            <person name="Baldwin D."/>
            <person name="Ballew R.M."/>
            <person name="Basu A."/>
            <person name="Baxendale J."/>
            <person name="Bayraktaroglu L."/>
            <person name="Beasley E.M."/>
            <person name="Beeson K.Y."/>
            <person name="Benos P.V."/>
            <person name="Berman B.P."/>
            <person name="Bhandari D."/>
            <person name="Bolshakov S."/>
            <person name="Borkova D."/>
            <person name="Botchan M.R."/>
            <person name="Bouck J."/>
            <person name="Brokstein P."/>
            <person name="Brottier P."/>
            <person name="Burtis K.C."/>
            <person name="Busam D.A."/>
            <person name="Butler H."/>
            <person name="Cadieu E."/>
            <person name="Center A."/>
            <person name="Chandra I."/>
            <person name="Cherry J.M."/>
            <person name="Cawley S."/>
            <person name="Dahlke C."/>
            <person name="Davenport L.B."/>
            <person name="Davies P."/>
            <person name="de Pablos B."/>
            <person name="Delcher A."/>
            <person name="Deng Z."/>
            <person name="Mays A.D."/>
            <person name="Dew I."/>
            <person name="Dietz S.M."/>
            <person name="Dodson K."/>
            <person name="Doup L.E."/>
            <person name="Downes M."/>
            <person name="Dugan-Rocha S."/>
            <person name="Dunkov B.C."/>
            <person name="Dunn P."/>
            <person name="Durbin K.J."/>
            <person name="Evangelista C.C."/>
            <person name="Ferraz C."/>
            <person name="Ferriera S."/>
            <person name="Fleischmann W."/>
            <person name="Fosler C."/>
            <person name="Gabrielian A.E."/>
            <person name="Garg N.S."/>
            <person name="Gelbart W.M."/>
            <person name="Glasser K."/>
            <person name="Glodek A."/>
            <person name="Gong F."/>
            <person name="Gorrell J.H."/>
            <person name="Gu Z."/>
            <person name="Guan P."/>
            <person name="Harris M."/>
            <person name="Harris N.L."/>
            <person name="Harvey D.A."/>
            <person name="Heiman T.J."/>
            <person name="Hernandez J.R."/>
            <person name="Houck J."/>
            <person name="Hostin D."/>
            <person name="Houston K.A."/>
            <person name="Howland T.J."/>
            <person name="Wei M.-H."/>
            <person name="Ibegwam C."/>
            <person name="Jalali M."/>
            <person name="Kalush F."/>
            <person name="Karpen G.H."/>
            <person name="Ke Z."/>
            <person name="Kennison J.A."/>
            <person name="Ketchum K.A."/>
            <person name="Kimmel B.E."/>
            <person name="Kodira C.D."/>
            <person name="Kraft C.L."/>
            <person name="Kravitz S."/>
            <person name="Kulp D."/>
            <person name="Lai Z."/>
            <person name="Lasko P."/>
            <person name="Lei Y."/>
            <person name="Levitsky A.A."/>
            <person name="Li J.H."/>
            <person name="Li Z."/>
            <person name="Liang Y."/>
            <person name="Lin X."/>
            <person name="Liu X."/>
            <person name="Mattei B."/>
            <person name="McIntosh T.C."/>
            <person name="McLeod M.P."/>
            <person name="McPherson D."/>
            <person name="Merkulov G."/>
            <person name="Milshina N.V."/>
            <person name="Mobarry C."/>
            <person name="Morris J."/>
            <person name="Moshrefi A."/>
            <person name="Mount S.M."/>
            <person name="Moy M."/>
            <person name="Murphy B."/>
            <person name="Murphy L."/>
            <person name="Muzny D.M."/>
            <person name="Nelson D.L."/>
            <person name="Nelson D.R."/>
            <person name="Nelson K.A."/>
            <person name="Nixon K."/>
            <person name="Nusskern D.R."/>
            <person name="Pacleb J.M."/>
            <person name="Palazzolo M."/>
            <person name="Pittman G.S."/>
            <person name="Pan S."/>
            <person name="Pollard J."/>
            <person name="Puri V."/>
            <person name="Reese M.G."/>
            <person name="Reinert K."/>
            <person name="Remington K."/>
            <person name="Saunders R.D.C."/>
            <person name="Scheeler F."/>
            <person name="Shen H."/>
            <person name="Shue B.C."/>
            <person name="Siden-Kiamos I."/>
            <person name="Simpson M."/>
            <person name="Skupski M.P."/>
            <person name="Smith T.J."/>
            <person name="Spier E."/>
            <person name="Spradling A.C."/>
            <person name="Stapleton M."/>
            <person name="Strong R."/>
            <person name="Sun E."/>
            <person name="Svirskas R."/>
            <person name="Tector C."/>
            <person name="Turner R."/>
            <person name="Venter E."/>
            <person name="Wang A.H."/>
            <person name="Wang X."/>
            <person name="Wang Z.-Y."/>
            <person name="Wassarman D.A."/>
            <person name="Weinstock G.M."/>
            <person name="Weissenbach J."/>
            <person name="Williams S.M."/>
            <person name="Woodage T."/>
            <person name="Worley K.C."/>
            <person name="Wu D."/>
            <person name="Yang S."/>
            <person name="Yao Q.A."/>
            <person name="Ye J."/>
            <person name="Yeh R.-F."/>
            <person name="Zaveri J.S."/>
            <person name="Zhan M."/>
            <person name="Zhang G."/>
            <person name="Zhao Q."/>
            <person name="Zheng L."/>
            <person name="Zheng X.H."/>
            <person name="Zhong F.N."/>
            <person name="Zhong W."/>
            <person name="Zhou X."/>
            <person name="Zhu S.C."/>
            <person name="Zhu X."/>
            <person name="Smith H.O."/>
            <person name="Gibbs R.A."/>
            <person name="Myers E.W."/>
            <person name="Rubin G.M."/>
            <person name="Venter J.C."/>
        </authorList>
    </citation>
    <scope>NUCLEOTIDE SEQUENCE [LARGE SCALE GENOMIC DNA]</scope>
    <source>
        <strain>Berkeley</strain>
    </source>
</reference>
<reference key="4">
    <citation type="journal article" date="2002" name="Genome Biol.">
        <title>Annotation of the Drosophila melanogaster euchromatic genome: a systematic review.</title>
        <authorList>
            <person name="Misra S."/>
            <person name="Crosby M.A."/>
            <person name="Mungall C.J."/>
            <person name="Matthews B.B."/>
            <person name="Campbell K.S."/>
            <person name="Hradecky P."/>
            <person name="Huang Y."/>
            <person name="Kaminker J.S."/>
            <person name="Millburn G.H."/>
            <person name="Prochnik S.E."/>
            <person name="Smith C.D."/>
            <person name="Tupy J.L."/>
            <person name="Whitfield E.J."/>
            <person name="Bayraktaroglu L."/>
            <person name="Berman B.P."/>
            <person name="Bettencourt B.R."/>
            <person name="Celniker S.E."/>
            <person name="de Grey A.D.N.J."/>
            <person name="Drysdale R.A."/>
            <person name="Harris N.L."/>
            <person name="Richter J."/>
            <person name="Russo S."/>
            <person name="Schroeder A.J."/>
            <person name="Shu S.Q."/>
            <person name="Stapleton M."/>
            <person name="Yamada C."/>
            <person name="Ashburner M."/>
            <person name="Gelbart W.M."/>
            <person name="Rubin G.M."/>
            <person name="Lewis S.E."/>
        </authorList>
    </citation>
    <scope>GENOME REANNOTATION</scope>
    <source>
        <strain>Berkeley</strain>
    </source>
</reference>
<reference key="5">
    <citation type="journal article" date="1995" name="Mol. Gen. Genet.">
        <title>Protein-protein interactions among components of the Drosophila primary sex determination signal.</title>
        <authorList>
            <person name="Liu Y."/>
            <person name="Belote J.M."/>
        </authorList>
    </citation>
    <scope>HOMODIMERIZATION</scope>
    <scope>INTERACTION WITH SISA; SC AND DA</scope>
</reference>
<reference key="6">
    <citation type="journal article" date="2008" name="J. Proteome Res.">
        <title>Phosphoproteome analysis of Drosophila melanogaster embryos.</title>
        <authorList>
            <person name="Zhai B."/>
            <person name="Villen J."/>
            <person name="Beausoleil S.A."/>
            <person name="Mintseris J."/>
            <person name="Gygi S.P."/>
        </authorList>
    </citation>
    <scope>PHOSPHORYLATION [LARGE SCALE ANALYSIS] AT SER-43; SER-535 AND SER-536</scope>
    <scope>IDENTIFICATION BY MASS SPECTROMETRY</scope>
    <source>
        <tissue>Embryo</tissue>
    </source>
</reference>
<organism>
    <name type="scientific">Drosophila melanogaster</name>
    <name type="common">Fruit fly</name>
    <dbReference type="NCBI Taxonomy" id="7227"/>
    <lineage>
        <taxon>Eukaryota</taxon>
        <taxon>Metazoa</taxon>
        <taxon>Ecdysozoa</taxon>
        <taxon>Arthropoda</taxon>
        <taxon>Hexapoda</taxon>
        <taxon>Insecta</taxon>
        <taxon>Pterygota</taxon>
        <taxon>Neoptera</taxon>
        <taxon>Endopterygota</taxon>
        <taxon>Diptera</taxon>
        <taxon>Brachycera</taxon>
        <taxon>Muscomorpha</taxon>
        <taxon>Ephydroidea</taxon>
        <taxon>Drosophilidae</taxon>
        <taxon>Drosophila</taxon>
        <taxon>Sophophora</taxon>
    </lineage>
</organism>
<sequence length="710" mass="73864">MATSDDEPMHLYEVFQNCFNKIANKQPTGTVGADRGGGGGYHSPYGSLGVENGMYPSDFNSMHDTVNGGNNRYANASTVDQYFDSAAAGSGGAWCQPQMSSANSYMGQSAYQNSGPLSGHSIDQQQQQVHQADGLGMGGGGGGGVGADGMHCPVTTGLPPISSFRPTSGGIGGPGAGQQAPVNVNVNPPAVFNSPQAHNHNHTVQAQHSALSTAGPLGHHSLNHTPHAHSHTLPLPHALPHGHTLPHPHHSQQNSPAVQSSDAFSGAGASVKVAGAGNSSAAALRQQMYMPADQSISSFGSNPSTPVNSPPPLTQSVVGGGGEPSVSGGSGWGHSVLNGGPSSSYASEMVPVSSLHTMASVFQGVRMEERLDDALNVLRNHCEPEMLAGVNQSLASIDNIDALTSFVPNSPSHLGSGGNSGSVSNTSNAALVHEVLALGAAAAAGTSGQSVGGAGSLASLKLDRSASTSLPKQTKKRKEHTAISNSVPAGVSTTSSLTSLDISDTKPTSSIESSNSGLQQHSQGKGTKRPRRYCSSADEDDDAEPAVKAIREKERRQANNARERIRIRDINEALKELGRMCMTHLKSDKPQTKLGILNMAVEVIMTLEQQVRERNLNPKAACLKRREEEKAEDGPKLSAQHHMIPQPQQVGGTPGSSYHSQPAQLVPPSSQTISTMTISLPVNQANNGLPPHLQQQQQQQSQLGHAQLPQ</sequence>
<dbReference type="EMBL" id="J03148">
    <property type="protein sequence ID" value="AAA28442.1"/>
    <property type="molecule type" value="mRNA"/>
</dbReference>
<dbReference type="EMBL" id="Y00221">
    <property type="protein sequence ID" value="CAA68368.1"/>
    <property type="molecule type" value="mRNA"/>
</dbReference>
<dbReference type="EMBL" id="AE014134">
    <property type="protein sequence ID" value="AAF52934.2"/>
    <property type="molecule type" value="Genomic_DNA"/>
</dbReference>
<dbReference type="PIR" id="S06891">
    <property type="entry name" value="A31641"/>
</dbReference>
<dbReference type="RefSeq" id="NP_001260340.1">
    <property type="nucleotide sequence ID" value="NM_001273411.1"/>
</dbReference>
<dbReference type="RefSeq" id="NP_001260341.1">
    <property type="nucleotide sequence ID" value="NM_001273412.1"/>
</dbReference>
<dbReference type="RefSeq" id="NP_477189.1">
    <property type="nucleotide sequence ID" value="NM_057841.4"/>
</dbReference>
<dbReference type="SMR" id="P11420"/>
<dbReference type="BioGRID" id="60497">
    <property type="interactions" value="56"/>
</dbReference>
<dbReference type="DIP" id="DIP-50N"/>
<dbReference type="FunCoup" id="P11420">
    <property type="interactions" value="1040"/>
</dbReference>
<dbReference type="IntAct" id="P11420">
    <property type="interactions" value="26"/>
</dbReference>
<dbReference type="STRING" id="7227.FBpp0423185"/>
<dbReference type="GlyGen" id="P11420">
    <property type="glycosylation" value="1 site"/>
</dbReference>
<dbReference type="iPTMnet" id="P11420"/>
<dbReference type="PaxDb" id="7227-FBpp0304504"/>
<dbReference type="EnsemblMetazoa" id="FBtr0080008">
    <property type="protein sequence ID" value="FBpp0079598"/>
    <property type="gene ID" value="FBgn0267821"/>
</dbReference>
<dbReference type="EnsemblMetazoa" id="FBtr0332195">
    <property type="protein sequence ID" value="FBpp0304504"/>
    <property type="gene ID" value="FBgn0267821"/>
</dbReference>
<dbReference type="EnsemblMetazoa" id="FBtr0332196">
    <property type="protein sequence ID" value="FBpp0304505"/>
    <property type="gene ID" value="FBgn0267821"/>
</dbReference>
<dbReference type="GeneID" id="34413"/>
<dbReference type="KEGG" id="dme:Dmel_CG5102"/>
<dbReference type="UCSC" id="CG5102-RA">
    <property type="organism name" value="d. melanogaster"/>
</dbReference>
<dbReference type="AGR" id="FB:FBgn0267821"/>
<dbReference type="CTD" id="13130"/>
<dbReference type="FlyBase" id="FBgn0267821">
    <property type="gene designation" value="da"/>
</dbReference>
<dbReference type="VEuPathDB" id="VectorBase:FBgn0267821"/>
<dbReference type="eggNOG" id="KOG3910">
    <property type="taxonomic scope" value="Eukaryota"/>
</dbReference>
<dbReference type="GeneTree" id="ENSGT00940000168822"/>
<dbReference type="HOGENOM" id="CLU_387465_0_0_1"/>
<dbReference type="InParanoid" id="P11420"/>
<dbReference type="OMA" id="MHCPVST"/>
<dbReference type="OrthoDB" id="10034090at2759"/>
<dbReference type="PhylomeDB" id="P11420"/>
<dbReference type="Reactome" id="R-DME-525793">
    <property type="pathway name" value="Myogenesis"/>
</dbReference>
<dbReference type="Reactome" id="R-DME-8939236">
    <property type="pathway name" value="RUNX1 regulates transcription of genes involved in differentiation of HSCs"/>
</dbReference>
<dbReference type="SignaLink" id="P11420"/>
<dbReference type="BioGRID-ORCS" id="34413">
    <property type="hits" value="0 hits in 3 CRISPR screens"/>
</dbReference>
<dbReference type="GenomeRNAi" id="34413"/>
<dbReference type="PRO" id="PR:P11420"/>
<dbReference type="Proteomes" id="UP000000803">
    <property type="component" value="Chromosome 2L"/>
</dbReference>
<dbReference type="Bgee" id="FBgn0267821">
    <property type="expression patterns" value="Expressed in gustatory receptor neuron (Drosophila) in insect leg and 278 other cell types or tissues"/>
</dbReference>
<dbReference type="ExpressionAtlas" id="P11420">
    <property type="expression patterns" value="baseline and differential"/>
</dbReference>
<dbReference type="GO" id="GO:0000785">
    <property type="term" value="C:chromatin"/>
    <property type="evidence" value="ECO:0000318"/>
    <property type="project" value="GO_Central"/>
</dbReference>
<dbReference type="GO" id="GO:0005634">
    <property type="term" value="C:nucleus"/>
    <property type="evidence" value="ECO:0000314"/>
    <property type="project" value="FlyBase"/>
</dbReference>
<dbReference type="GO" id="GO:0005667">
    <property type="term" value="C:transcription regulator complex"/>
    <property type="evidence" value="ECO:0000353"/>
    <property type="project" value="FlyBase"/>
</dbReference>
<dbReference type="GO" id="GO:0001228">
    <property type="term" value="F:DNA-binding transcription activator activity, RNA polymerase II-specific"/>
    <property type="evidence" value="ECO:0000314"/>
    <property type="project" value="FlyBase"/>
</dbReference>
<dbReference type="GO" id="GO:0003700">
    <property type="term" value="F:DNA-binding transcription factor activity"/>
    <property type="evidence" value="ECO:0000314"/>
    <property type="project" value="FlyBase"/>
</dbReference>
<dbReference type="GO" id="GO:0140297">
    <property type="term" value="F:DNA-binding transcription factor binding"/>
    <property type="evidence" value="ECO:0000316"/>
    <property type="project" value="FlyBase"/>
</dbReference>
<dbReference type="GO" id="GO:0046982">
    <property type="term" value="F:protein heterodimerization activity"/>
    <property type="evidence" value="ECO:0000353"/>
    <property type="project" value="UniProtKB"/>
</dbReference>
<dbReference type="GO" id="GO:0000978">
    <property type="term" value="F:RNA polymerase II cis-regulatory region sequence-specific DNA binding"/>
    <property type="evidence" value="ECO:0000318"/>
    <property type="project" value="GO_Central"/>
</dbReference>
<dbReference type="GO" id="GO:0043565">
    <property type="term" value="F:sequence-specific DNA binding"/>
    <property type="evidence" value="ECO:0000314"/>
    <property type="project" value="FlyBase"/>
</dbReference>
<dbReference type="GO" id="GO:0008407">
    <property type="term" value="P:chaeta morphogenesis"/>
    <property type="evidence" value="ECO:0000315"/>
    <property type="project" value="FlyBase"/>
</dbReference>
<dbReference type="GO" id="GO:0030237">
    <property type="term" value="P:female sex determination"/>
    <property type="evidence" value="ECO:0000315"/>
    <property type="project" value="FlyBase"/>
</dbReference>
<dbReference type="GO" id="GO:0030707">
    <property type="term" value="P:follicle cell of egg chamber development"/>
    <property type="evidence" value="ECO:0000315"/>
    <property type="project" value="FlyBase"/>
</dbReference>
<dbReference type="GO" id="GO:0061525">
    <property type="term" value="P:hindgut development"/>
    <property type="evidence" value="ECO:0000315"/>
    <property type="project" value="FlyBase"/>
</dbReference>
<dbReference type="GO" id="GO:0061382">
    <property type="term" value="P:Malpighian tubule tip cell differentiation"/>
    <property type="evidence" value="ECO:0000315"/>
    <property type="project" value="FlyBase"/>
</dbReference>
<dbReference type="GO" id="GO:0007400">
    <property type="term" value="P:neuroblast fate determination"/>
    <property type="evidence" value="ECO:0000315"/>
    <property type="project" value="FlyBase"/>
</dbReference>
<dbReference type="GO" id="GO:0061101">
    <property type="term" value="P:neuroendocrine cell differentiation"/>
    <property type="evidence" value="ECO:0000315"/>
    <property type="project" value="FlyBase"/>
</dbReference>
<dbReference type="GO" id="GO:0048663">
    <property type="term" value="P:neuron fate commitment"/>
    <property type="evidence" value="ECO:0000315"/>
    <property type="project" value="FlyBase"/>
</dbReference>
<dbReference type="GO" id="GO:0048477">
    <property type="term" value="P:oogenesis"/>
    <property type="evidence" value="ECO:0000315"/>
    <property type="project" value="FlyBase"/>
</dbReference>
<dbReference type="GO" id="GO:0045893">
    <property type="term" value="P:positive regulation of DNA-templated transcription"/>
    <property type="evidence" value="ECO:0000314"/>
    <property type="project" value="FlyBase"/>
</dbReference>
<dbReference type="GO" id="GO:0045944">
    <property type="term" value="P:positive regulation of transcription by RNA polymerase II"/>
    <property type="evidence" value="ECO:0000315"/>
    <property type="project" value="FlyBase"/>
</dbReference>
<dbReference type="GO" id="GO:0050821">
    <property type="term" value="P:protein stabilization"/>
    <property type="evidence" value="ECO:0000314"/>
    <property type="project" value="FlyBase"/>
</dbReference>
<dbReference type="GO" id="GO:0006357">
    <property type="term" value="P:regulation of transcription by RNA polymerase II"/>
    <property type="evidence" value="ECO:0000318"/>
    <property type="project" value="GO_Central"/>
</dbReference>
<dbReference type="GO" id="GO:0007423">
    <property type="term" value="P:sensory organ development"/>
    <property type="evidence" value="ECO:0000315"/>
    <property type="project" value="FlyBase"/>
</dbReference>
<dbReference type="GO" id="GO:0035019">
    <property type="term" value="P:somatic stem cell population maintenance"/>
    <property type="evidence" value="ECO:0000315"/>
    <property type="project" value="FlyBase"/>
</dbReference>
<dbReference type="CDD" id="cd11467">
    <property type="entry name" value="bHLH_E-protein_Da_like"/>
    <property type="match status" value="1"/>
</dbReference>
<dbReference type="FunFam" id="4.10.280.10:FF:000001">
    <property type="entry name" value="Putative transcription factor 12"/>
    <property type="match status" value="1"/>
</dbReference>
<dbReference type="Gene3D" id="4.10.280.10">
    <property type="entry name" value="Helix-loop-helix DNA-binding domain"/>
    <property type="match status" value="1"/>
</dbReference>
<dbReference type="InterPro" id="IPR011598">
    <property type="entry name" value="bHLH_dom"/>
</dbReference>
<dbReference type="InterPro" id="IPR036638">
    <property type="entry name" value="HLH_DNA-bd_sf"/>
</dbReference>
<dbReference type="InterPro" id="IPR051098">
    <property type="entry name" value="NeuroDiff_E-box_TFs"/>
</dbReference>
<dbReference type="PANTHER" id="PTHR11793">
    <property type="entry name" value="BASIC HELIX-LOOP-HELIX TRANSCRIPTION FACTOR"/>
    <property type="match status" value="1"/>
</dbReference>
<dbReference type="PANTHER" id="PTHR11793:SF13">
    <property type="entry name" value="PROTEIN DAUGHTERLESS"/>
    <property type="match status" value="1"/>
</dbReference>
<dbReference type="Pfam" id="PF00010">
    <property type="entry name" value="HLH"/>
    <property type="match status" value="1"/>
</dbReference>
<dbReference type="SMART" id="SM00353">
    <property type="entry name" value="HLH"/>
    <property type="match status" value="1"/>
</dbReference>
<dbReference type="SUPFAM" id="SSF47459">
    <property type="entry name" value="HLH, helix-loop-helix DNA-binding domain"/>
    <property type="match status" value="1"/>
</dbReference>
<dbReference type="PROSITE" id="PS50888">
    <property type="entry name" value="BHLH"/>
    <property type="match status" value="1"/>
</dbReference>
<protein>
    <recommendedName>
        <fullName>Protein daughterless</fullName>
    </recommendedName>
</protein>